<geneLocation type="apicoplast"/>
<gene>
    <name evidence="4" type="primary">SufB</name>
    <name evidence="5" type="ORF">PF3D7_API04700</name>
</gene>
<sequence>MIKLKNFLNIYNLNYKYQYKNKINLYLIRQGLNINLIKNLSSNIFLYMFIYNFKKYSLKLLNIFKLPDWNFFDCPNINYDNIIYYSSILKDNNLIYYLKNNLNIEFLDSILIKNNSIDIIFDSMSILHTTQYFLKKLGIIFLPLFDIIFKYPLLIKKYLGTIISYKDNFFANINSIIFSEGSFCYIPKYVKCNFNLSTYFKTNSSDFAQFERTLIIVGKYSYVSYLEGCTASLYKESQLHVAIVEIIVKDYGYIKYYTLQNWYRGDYLGNGGLYNFTTKRGICLNYSKLDWIQVEVGSIITWKYPSTILKGKFSISNFYSISFISNMQIADTGSKMYHIGSYTKSYIISKSISLNNSLNIFRGLVYIKPFSYKSYNYTECSSLIFGNNSLTVTIPYIKNYNNTSYVKQEAFVSKIEIIYLFLLMQRGLSISESISLLIIGFCSDIYNKLPFEFNLEIPILFSLKIKDIFN</sequence>
<feature type="chain" id="PRO_0000459592" description="Iron-sulfur cluster assembly protein SufB">
    <location>
        <begin position="1"/>
        <end position="470"/>
    </location>
</feature>
<comment type="function">
    <text evidence="1 2">Participates in the sulfur mobilization (SUF) pathway for iron-sulfur (Fe-S) cluster biogenesis (PubMed:28695709). As part of a complex consisting of SufB-SufC(2)-SufD, involved in assembly of [4Fe-4S] clusters (PubMed:28695709). Exhibits ATPase activity (PubMed:21722645).</text>
</comment>
<comment type="pathway">
    <text evidence="4">Cofactor biosynthesis; iron-sulfur cluster biosynthesis.</text>
</comment>
<comment type="subunit">
    <text evidence="1 2">Component of a complex composed of SufB, SufC and SufD in a stoichiometric ratio of 1:2:1 (PubMed:28695709). Interacts with SufC (PubMed:21722645). Interacts with SufD (PubMed:28695709).</text>
</comment>
<comment type="induction">
    <text evidence="1">Expression is not affected by oxidative stress.</text>
</comment>
<comment type="similarity">
    <text evidence="4">Belongs to the iron-sulfur cluster assembly SufBD family.</text>
</comment>
<dbReference type="EMBL" id="X95275">
    <property type="protein sequence ID" value="CAA64569.1"/>
    <property type="molecule type" value="Genomic_DNA"/>
</dbReference>
<dbReference type="EMBL" id="LR605956">
    <property type="protein sequence ID" value="VWP78964.1"/>
    <property type="molecule type" value="Genomic_DNA"/>
</dbReference>
<dbReference type="PIR" id="S72279">
    <property type="entry name" value="S72279"/>
</dbReference>
<dbReference type="SMR" id="Q25799"/>
<dbReference type="FunCoup" id="Q25799">
    <property type="interactions" value="5"/>
</dbReference>
<dbReference type="STRING" id="36329.Q25799"/>
<dbReference type="VEuPathDB" id="PlasmoDB:PF3D7_API04700"/>
<dbReference type="InParanoid" id="Q25799"/>
<dbReference type="OrthoDB" id="446132at2759"/>
<dbReference type="UniPathway" id="UPA00266"/>
<dbReference type="Proteomes" id="UP000001450">
    <property type="component" value="Apicoplast API"/>
</dbReference>
<dbReference type="GO" id="GO:0051539">
    <property type="term" value="F:4 iron, 4 sulfur cluster binding"/>
    <property type="evidence" value="ECO:0007669"/>
    <property type="project" value="UniProtKB-KW"/>
</dbReference>
<dbReference type="GO" id="GO:0016887">
    <property type="term" value="F:ATP hydrolysis activity"/>
    <property type="evidence" value="ECO:0000314"/>
    <property type="project" value="CACAO"/>
</dbReference>
<dbReference type="GO" id="GO:0046872">
    <property type="term" value="F:metal ion binding"/>
    <property type="evidence" value="ECO:0007669"/>
    <property type="project" value="UniProtKB-KW"/>
</dbReference>
<dbReference type="GO" id="GO:0016226">
    <property type="term" value="P:iron-sulfur cluster assembly"/>
    <property type="evidence" value="ECO:0007669"/>
    <property type="project" value="InterPro"/>
</dbReference>
<dbReference type="InterPro" id="IPR055346">
    <property type="entry name" value="Fe-S_cluster_assembly_SufBD"/>
</dbReference>
<dbReference type="InterPro" id="IPR010231">
    <property type="entry name" value="SUF_FeS_clus_asmbl_SufB"/>
</dbReference>
<dbReference type="InterPro" id="IPR000825">
    <property type="entry name" value="SUF_FeS_clus_asmbl_SufBD_core"/>
</dbReference>
<dbReference type="InterPro" id="IPR037284">
    <property type="entry name" value="SUF_FeS_clus_asmbl_SufBD_sf"/>
</dbReference>
<dbReference type="NCBIfam" id="TIGR01980">
    <property type="entry name" value="sufB"/>
    <property type="match status" value="1"/>
</dbReference>
<dbReference type="PANTHER" id="PTHR30508">
    <property type="entry name" value="FES CLUSTER ASSEMBLY PROTEIN SUF"/>
    <property type="match status" value="1"/>
</dbReference>
<dbReference type="PANTHER" id="PTHR30508:SF1">
    <property type="entry name" value="UPF0051 PROTEIN ABCI8, CHLOROPLASTIC-RELATED"/>
    <property type="match status" value="1"/>
</dbReference>
<dbReference type="Pfam" id="PF01458">
    <property type="entry name" value="SUFBD_core"/>
    <property type="match status" value="1"/>
</dbReference>
<dbReference type="SUPFAM" id="SSF101960">
    <property type="entry name" value="Stabilizer of iron transporter SufD"/>
    <property type="match status" value="1"/>
</dbReference>
<name>SUFB_PLAF7</name>
<evidence type="ECO:0000269" key="1">
    <source>
    </source>
</evidence>
<evidence type="ECO:0000269" key="2">
    <source>
    </source>
</evidence>
<evidence type="ECO:0000303" key="3">
    <source>
    </source>
</evidence>
<evidence type="ECO:0000305" key="4"/>
<evidence type="ECO:0000312" key="5">
    <source>
        <dbReference type="EMBL" id="VWP78964.1"/>
    </source>
</evidence>
<evidence type="ECO:0000312" key="6">
    <source>
        <dbReference type="Proteomes" id="UP000001450"/>
    </source>
</evidence>
<organism evidence="6">
    <name type="scientific">Plasmodium falciparum (isolate 3D7)</name>
    <dbReference type="NCBI Taxonomy" id="36329"/>
    <lineage>
        <taxon>Eukaryota</taxon>
        <taxon>Sar</taxon>
        <taxon>Alveolata</taxon>
        <taxon>Apicomplexa</taxon>
        <taxon>Aconoidasida</taxon>
        <taxon>Haemosporida</taxon>
        <taxon>Plasmodiidae</taxon>
        <taxon>Plasmodium</taxon>
        <taxon>Plasmodium (Laverania)</taxon>
    </lineage>
</organism>
<accession>Q25799</accession>
<proteinExistence type="evidence at protein level"/>
<protein>
    <recommendedName>
        <fullName evidence="4">Iron-sulfur cluster assembly protein SufB</fullName>
        <shortName evidence="3">PfSufB</shortName>
    </recommendedName>
</protein>
<keyword id="KW-0004">4Fe-4S</keyword>
<keyword id="KW-0408">Iron</keyword>
<keyword id="KW-0411">Iron-sulfur</keyword>
<keyword id="KW-0479">Metal-binding</keyword>
<keyword id="KW-1185">Reference proteome</keyword>
<reference evidence="6" key="1">
    <citation type="journal article" date="1996" name="J. Mol. Biol.">
        <title>Complete gene map of the plastid-like DNA of the malaria parasite Plasmodium falciparum.</title>
        <authorList>
            <person name="Wilson R.J.M."/>
            <person name="Denny P.W."/>
            <person name="Preiser P.R."/>
            <person name="Rangachari K."/>
            <person name="Roberts K."/>
            <person name="Roy A."/>
            <person name="Whyte A."/>
            <person name="Strath M."/>
            <person name="Moore D.J."/>
            <person name="Moore P.W."/>
            <person name="Williamson D.H."/>
        </authorList>
    </citation>
    <scope>NUCLEOTIDE SEQUENCE [LARGE SCALE GENOMIC DNA]</scope>
    <source>
        <strain evidence="6">BW/C10</strain>
    </source>
</reference>
<reference evidence="6" key="2">
    <citation type="submission" date="2019-06" db="EMBL/GenBank/DDBJ databases">
        <authorList>
            <consortium name="Pathogen Informatics"/>
        </authorList>
    </citation>
    <scope>NUCLEOTIDE SEQUENCE [LARGE SCALE GENOMIC DNA]</scope>
    <source>
        <strain evidence="6">3D7</strain>
    </source>
</reference>
<reference evidence="4" key="3">
    <citation type="journal article" date="2011" name="Int. J. Parasitol.">
        <title>Interaction between sulphur mobilisation proteins SufB and SufC: evidence for an iron-sulphur cluster biogenesis pathway in the apicoplast of Plasmodium falciparum.</title>
        <authorList>
            <person name="Kumar B."/>
            <person name="Chaubey S."/>
            <person name="Shah P."/>
            <person name="Tanveer A."/>
            <person name="Charan M."/>
            <person name="Siddiqi M.I."/>
            <person name="Habib S."/>
        </authorList>
    </citation>
    <scope>FUNCTION</scope>
    <scope>INTERACTION WITH SUFC</scope>
    <scope>INDUCTION</scope>
    <source>
        <strain evidence="3">3D7</strain>
    </source>
</reference>
<reference evidence="4" key="4">
    <citation type="journal article" date="2017" name="FEBS J.">
        <title>[Fe-S] cluster assembly in the apicoplast and its indispensability in mosquito stages of the malaria parasite.</title>
        <authorList>
            <person name="Charan M."/>
            <person name="Choudhary H.H."/>
            <person name="Singh N."/>
            <person name="Sadik M."/>
            <person name="Siddiqi M.I."/>
            <person name="Mishra S."/>
            <person name="Habib S."/>
        </authorList>
    </citation>
    <scope>FUNCTION</scope>
    <scope>IDENTIFICATION IN COMPLEX WITH SUFC AND SUFD</scope>
    <scope>INTERACTION WITH SUFD</scope>
</reference>